<reference key="1">
    <citation type="journal article" date="2008" name="J. Bacteriol.">
        <title>Genome of the actinomycete plant pathogen Clavibacter michiganensis subsp. sepedonicus suggests recent niche adaptation.</title>
        <authorList>
            <person name="Bentley S.D."/>
            <person name="Corton C."/>
            <person name="Brown S.E."/>
            <person name="Barron A."/>
            <person name="Clark L."/>
            <person name="Doggett J."/>
            <person name="Harris B."/>
            <person name="Ormond D."/>
            <person name="Quail M.A."/>
            <person name="May G."/>
            <person name="Francis D."/>
            <person name="Knudson D."/>
            <person name="Parkhill J."/>
            <person name="Ishimaru C.A."/>
        </authorList>
    </citation>
    <scope>NUCLEOTIDE SEQUENCE [LARGE SCALE GENOMIC DNA]</scope>
    <source>
        <strain>ATCC 33113 / DSM 20744 / JCM 9667 / LMG 2889 / ICMP 2535 / C-1</strain>
    </source>
</reference>
<keyword id="KW-0687">Ribonucleoprotein</keyword>
<keyword id="KW-0689">Ribosomal protein</keyword>
<keyword id="KW-0694">RNA-binding</keyword>
<keyword id="KW-0699">rRNA-binding</keyword>
<organism>
    <name type="scientific">Clavibacter sepedonicus</name>
    <name type="common">Clavibacter michiganensis subsp. sepedonicus</name>
    <dbReference type="NCBI Taxonomy" id="31964"/>
    <lineage>
        <taxon>Bacteria</taxon>
        <taxon>Bacillati</taxon>
        <taxon>Actinomycetota</taxon>
        <taxon>Actinomycetes</taxon>
        <taxon>Micrococcales</taxon>
        <taxon>Microbacteriaceae</taxon>
        <taxon>Clavibacter</taxon>
    </lineage>
</organism>
<accession>B0RDA1</accession>
<feature type="chain" id="PRO_1000081420" description="Small ribosomal subunit protein bS20">
    <location>
        <begin position="1"/>
        <end position="87"/>
    </location>
</feature>
<feature type="region of interest" description="Disordered" evidence="2">
    <location>
        <begin position="1"/>
        <end position="22"/>
    </location>
</feature>
<evidence type="ECO:0000255" key="1">
    <source>
        <dbReference type="HAMAP-Rule" id="MF_00500"/>
    </source>
</evidence>
<evidence type="ECO:0000256" key="2">
    <source>
        <dbReference type="SAM" id="MobiDB-lite"/>
    </source>
</evidence>
<evidence type="ECO:0000305" key="3"/>
<dbReference type="EMBL" id="AM849034">
    <property type="protein sequence ID" value="CAQ01857.1"/>
    <property type="molecule type" value="Genomic_DNA"/>
</dbReference>
<dbReference type="RefSeq" id="WP_012299101.1">
    <property type="nucleotide sequence ID" value="NZ_MZMN01000003.1"/>
</dbReference>
<dbReference type="SMR" id="B0RDA1"/>
<dbReference type="STRING" id="31964.CMS1755"/>
<dbReference type="KEGG" id="cms:CMS1755"/>
<dbReference type="eggNOG" id="COG0268">
    <property type="taxonomic scope" value="Bacteria"/>
</dbReference>
<dbReference type="HOGENOM" id="CLU_160655_0_1_11"/>
<dbReference type="OrthoDB" id="9807974at2"/>
<dbReference type="Proteomes" id="UP000001318">
    <property type="component" value="Chromosome"/>
</dbReference>
<dbReference type="GO" id="GO:0005829">
    <property type="term" value="C:cytosol"/>
    <property type="evidence" value="ECO:0007669"/>
    <property type="project" value="TreeGrafter"/>
</dbReference>
<dbReference type="GO" id="GO:0015935">
    <property type="term" value="C:small ribosomal subunit"/>
    <property type="evidence" value="ECO:0007669"/>
    <property type="project" value="TreeGrafter"/>
</dbReference>
<dbReference type="GO" id="GO:0070181">
    <property type="term" value="F:small ribosomal subunit rRNA binding"/>
    <property type="evidence" value="ECO:0007669"/>
    <property type="project" value="TreeGrafter"/>
</dbReference>
<dbReference type="GO" id="GO:0003735">
    <property type="term" value="F:structural constituent of ribosome"/>
    <property type="evidence" value="ECO:0007669"/>
    <property type="project" value="InterPro"/>
</dbReference>
<dbReference type="GO" id="GO:0006412">
    <property type="term" value="P:translation"/>
    <property type="evidence" value="ECO:0007669"/>
    <property type="project" value="UniProtKB-UniRule"/>
</dbReference>
<dbReference type="FunFam" id="1.20.58.110:FF:000001">
    <property type="entry name" value="30S ribosomal protein S20"/>
    <property type="match status" value="1"/>
</dbReference>
<dbReference type="Gene3D" id="1.20.58.110">
    <property type="entry name" value="Ribosomal protein S20"/>
    <property type="match status" value="1"/>
</dbReference>
<dbReference type="HAMAP" id="MF_00500">
    <property type="entry name" value="Ribosomal_bS20"/>
    <property type="match status" value="1"/>
</dbReference>
<dbReference type="InterPro" id="IPR002583">
    <property type="entry name" value="Ribosomal_bS20"/>
</dbReference>
<dbReference type="InterPro" id="IPR036510">
    <property type="entry name" value="Ribosomal_bS20_sf"/>
</dbReference>
<dbReference type="NCBIfam" id="TIGR00029">
    <property type="entry name" value="S20"/>
    <property type="match status" value="1"/>
</dbReference>
<dbReference type="PANTHER" id="PTHR33398">
    <property type="entry name" value="30S RIBOSOMAL PROTEIN S20"/>
    <property type="match status" value="1"/>
</dbReference>
<dbReference type="PANTHER" id="PTHR33398:SF1">
    <property type="entry name" value="SMALL RIBOSOMAL SUBUNIT PROTEIN BS20C"/>
    <property type="match status" value="1"/>
</dbReference>
<dbReference type="Pfam" id="PF01649">
    <property type="entry name" value="Ribosomal_S20p"/>
    <property type="match status" value="1"/>
</dbReference>
<dbReference type="SUPFAM" id="SSF46992">
    <property type="entry name" value="Ribosomal protein S20"/>
    <property type="match status" value="1"/>
</dbReference>
<gene>
    <name evidence="1" type="primary">rpsT</name>
    <name type="ordered locus">CMS1755</name>
</gene>
<proteinExistence type="inferred from homology"/>
<sequence length="87" mass="9121">MANIKSQIKRIGTNKKAQERNKAVKSELKTAIRSVKTAISAGDKDAAVKAVSLAGKKLDKAASKGVIHKNQAANRKGAIAKQVAKIG</sequence>
<name>RS20_CLASE</name>
<protein>
    <recommendedName>
        <fullName evidence="1">Small ribosomal subunit protein bS20</fullName>
    </recommendedName>
    <alternativeName>
        <fullName evidence="3">30S ribosomal protein S20</fullName>
    </alternativeName>
</protein>
<comment type="function">
    <text evidence="1">Binds directly to 16S ribosomal RNA.</text>
</comment>
<comment type="similarity">
    <text evidence="1">Belongs to the bacterial ribosomal protein bS20 family.</text>
</comment>